<accession>A1KJX3</accession>
<protein>
    <recommendedName>
        <fullName evidence="1">Catalase-peroxidase</fullName>
        <shortName evidence="1">CP</shortName>
        <ecNumber evidence="1">1.11.1.21</ecNumber>
    </recommendedName>
    <alternativeName>
        <fullName evidence="1">Peroxidase/catalase</fullName>
    </alternativeName>
</protein>
<proteinExistence type="inferred from homology"/>
<evidence type="ECO:0000255" key="1">
    <source>
        <dbReference type="HAMAP-Rule" id="MF_01961"/>
    </source>
</evidence>
<reference key="1">
    <citation type="journal article" date="2007" name="Proc. Natl. Acad. Sci. U.S.A.">
        <title>Genome plasticity of BCG and impact on vaccine efficacy.</title>
        <authorList>
            <person name="Brosch R."/>
            <person name="Gordon S.V."/>
            <person name="Garnier T."/>
            <person name="Eiglmeier K."/>
            <person name="Frigui W."/>
            <person name="Valenti P."/>
            <person name="Dos Santos S."/>
            <person name="Duthoy S."/>
            <person name="Lacroix C."/>
            <person name="Garcia-Pelayo C."/>
            <person name="Inwald J.K."/>
            <person name="Golby P."/>
            <person name="Garcia J.N."/>
            <person name="Hewinson R.G."/>
            <person name="Behr M.A."/>
            <person name="Quail M.A."/>
            <person name="Churcher C."/>
            <person name="Barrell B.G."/>
            <person name="Parkhill J."/>
            <person name="Cole S.T."/>
        </authorList>
    </citation>
    <scope>NUCLEOTIDE SEQUENCE [LARGE SCALE GENOMIC DNA]</scope>
    <source>
        <strain>BCG / Pasteur 1173P2</strain>
    </source>
</reference>
<feature type="chain" id="PRO_0000354836" description="Catalase-peroxidase">
    <location>
        <begin position="1"/>
        <end position="740"/>
    </location>
</feature>
<feature type="active site" description="Proton acceptor" evidence="1">
    <location>
        <position position="108"/>
    </location>
</feature>
<feature type="binding site" description="axial binding residue" evidence="1">
    <location>
        <position position="270"/>
    </location>
    <ligand>
        <name>heme b</name>
        <dbReference type="ChEBI" id="CHEBI:60344"/>
    </ligand>
    <ligandPart>
        <name>Fe</name>
        <dbReference type="ChEBI" id="CHEBI:18248"/>
    </ligandPart>
</feature>
<feature type="site" description="Transition state stabilizer" evidence="1">
    <location>
        <position position="104"/>
    </location>
</feature>
<feature type="cross-link" description="Tryptophyl-tyrosyl-methioninium (Trp-Tyr) (with M-255)" evidence="1">
    <location>
        <begin position="107"/>
        <end position="229"/>
    </location>
</feature>
<feature type="cross-link" description="Tryptophyl-tyrosyl-methioninium (Tyr-Met) (with W-107)" evidence="1">
    <location>
        <begin position="229"/>
        <end position="255"/>
    </location>
</feature>
<comment type="function">
    <text evidence="1">Bifunctional enzyme with both catalase and broad-spectrum peroxidase activity.</text>
</comment>
<comment type="catalytic activity">
    <reaction evidence="1">
        <text>H2O2 + AH2 = A + 2 H2O</text>
        <dbReference type="Rhea" id="RHEA:30275"/>
        <dbReference type="ChEBI" id="CHEBI:13193"/>
        <dbReference type="ChEBI" id="CHEBI:15377"/>
        <dbReference type="ChEBI" id="CHEBI:16240"/>
        <dbReference type="ChEBI" id="CHEBI:17499"/>
        <dbReference type="EC" id="1.11.1.21"/>
    </reaction>
</comment>
<comment type="catalytic activity">
    <reaction evidence="1">
        <text>2 H2O2 = O2 + 2 H2O</text>
        <dbReference type="Rhea" id="RHEA:20309"/>
        <dbReference type="ChEBI" id="CHEBI:15377"/>
        <dbReference type="ChEBI" id="CHEBI:15379"/>
        <dbReference type="ChEBI" id="CHEBI:16240"/>
        <dbReference type="EC" id="1.11.1.21"/>
    </reaction>
</comment>
<comment type="cofactor">
    <cofactor evidence="1">
        <name>heme b</name>
        <dbReference type="ChEBI" id="CHEBI:60344"/>
    </cofactor>
    <text evidence="1">Binds 1 heme b (iron(II)-protoporphyrin IX) group per dimer.</text>
</comment>
<comment type="subunit">
    <text evidence="1">Homodimer or homotetramer.</text>
</comment>
<comment type="PTM">
    <text evidence="1">Formation of the three residue Trp-Tyr-Met cross-link is important for the catalase, but not the peroxidase activity of the enzyme.</text>
</comment>
<comment type="similarity">
    <text evidence="1">Belongs to the peroxidase family. Peroxidase/catalase subfamily.</text>
</comment>
<sequence>MPEQHPPITETTTGAASNGCPVVGHMKYPVEGGGNQDWWPNRLNLKVLHQNPAVADPMGAAFDYAAEVATIDVDALTRDIEEVMTTSQPWWPADYGHYGPLFIRMAWHAAGTYRIHDGRGGAGGGMQRFAPLNSWPDNASLDKARRLLWPVKKKYGKKLSWADLIVFAGNCALESMGFKTFGFGFGRVDQWEPDEVYWGKEATWLGDERYSGKRDLENPLAAVQMGLIYVNPEGPNGNPDPMAAAVDIRETFRRMAMNDVETAALIVGGHTFGKTHGAGPADLVGPEPEAAPLEQMGLGWKSSYGTGTGKDAITSGIEVVWTNTPTKWDNSFLEILYGYEWELTKSPAGAWQYTAKDGAGAGTIPDPFGGPGRSPTMLATDLSLRVDPIYERITRRWLEHPEELADEFAKAWYKLIHRDMGPVARYLGPLVPKQTLLWQDPVPAVSHDLVGEAEIASLKSQILASGLTVSQLVSTAWAAASSFRGSDKRGGANGGRIRLQPQVGWEVNDPDGDLRKVIRTLEEIQESFNSAAPGNIKVSFADLVVLGGCAAIEKAAKAAGHNITVPFTPGRTDASQEQTDVESFAVLEPKADGFRNYLGKGNPLPAEYMLLDKANLLTLSAPEMTVLVGGLRVLGANYKRLPLGVFTEASESLTNDFFVNLLDMGITWEPSPADDGTYQGKDGSGKVKWTGSRVDLVFGSNSELRALVEVYGADDAQPKFVQDFVAAWDKVMNLDRFDVR</sequence>
<gene>
    <name evidence="1" type="primary">katG</name>
    <name type="ordered locus">BCG_1947c</name>
</gene>
<organism>
    <name type="scientific">Mycobacterium bovis (strain BCG / Pasteur 1173P2)</name>
    <dbReference type="NCBI Taxonomy" id="410289"/>
    <lineage>
        <taxon>Bacteria</taxon>
        <taxon>Bacillati</taxon>
        <taxon>Actinomycetota</taxon>
        <taxon>Actinomycetes</taxon>
        <taxon>Mycobacteriales</taxon>
        <taxon>Mycobacteriaceae</taxon>
        <taxon>Mycobacterium</taxon>
        <taxon>Mycobacterium tuberculosis complex</taxon>
    </lineage>
</organism>
<name>KATG_MYCBP</name>
<dbReference type="EC" id="1.11.1.21" evidence="1"/>
<dbReference type="EMBL" id="AM408590">
    <property type="protein sequence ID" value="CAL71934.1"/>
    <property type="molecule type" value="Genomic_DNA"/>
</dbReference>
<dbReference type="RefSeq" id="WP_003901285.1">
    <property type="nucleotide sequence ID" value="NC_008769.1"/>
</dbReference>
<dbReference type="SMR" id="A1KJX3"/>
<dbReference type="GeneID" id="45425879"/>
<dbReference type="KEGG" id="mbb:BCG_1947c"/>
<dbReference type="HOGENOM" id="CLU_025424_2_0_11"/>
<dbReference type="Proteomes" id="UP000001472">
    <property type="component" value="Chromosome"/>
</dbReference>
<dbReference type="GO" id="GO:0005829">
    <property type="term" value="C:cytosol"/>
    <property type="evidence" value="ECO:0007669"/>
    <property type="project" value="TreeGrafter"/>
</dbReference>
<dbReference type="GO" id="GO:0004096">
    <property type="term" value="F:catalase activity"/>
    <property type="evidence" value="ECO:0007669"/>
    <property type="project" value="UniProtKB-UniRule"/>
</dbReference>
<dbReference type="GO" id="GO:0020037">
    <property type="term" value="F:heme binding"/>
    <property type="evidence" value="ECO:0007669"/>
    <property type="project" value="InterPro"/>
</dbReference>
<dbReference type="GO" id="GO:0046872">
    <property type="term" value="F:metal ion binding"/>
    <property type="evidence" value="ECO:0007669"/>
    <property type="project" value="UniProtKB-KW"/>
</dbReference>
<dbReference type="GO" id="GO:0070301">
    <property type="term" value="P:cellular response to hydrogen peroxide"/>
    <property type="evidence" value="ECO:0007669"/>
    <property type="project" value="TreeGrafter"/>
</dbReference>
<dbReference type="GO" id="GO:0042744">
    <property type="term" value="P:hydrogen peroxide catabolic process"/>
    <property type="evidence" value="ECO:0007669"/>
    <property type="project" value="UniProtKB-KW"/>
</dbReference>
<dbReference type="CDD" id="cd00649">
    <property type="entry name" value="catalase_peroxidase_1"/>
    <property type="match status" value="1"/>
</dbReference>
<dbReference type="CDD" id="cd08200">
    <property type="entry name" value="catalase_peroxidase_2"/>
    <property type="match status" value="1"/>
</dbReference>
<dbReference type="FunFam" id="1.10.420.10:FF:000002">
    <property type="entry name" value="Catalase-peroxidase"/>
    <property type="match status" value="1"/>
</dbReference>
<dbReference type="FunFam" id="1.10.420.10:FF:000004">
    <property type="entry name" value="Catalase-peroxidase"/>
    <property type="match status" value="1"/>
</dbReference>
<dbReference type="FunFam" id="1.10.520.10:FF:000002">
    <property type="entry name" value="Catalase-peroxidase"/>
    <property type="match status" value="1"/>
</dbReference>
<dbReference type="Gene3D" id="1.10.520.10">
    <property type="match status" value="2"/>
</dbReference>
<dbReference type="Gene3D" id="1.10.420.10">
    <property type="entry name" value="Peroxidase, domain 2"/>
    <property type="match status" value="2"/>
</dbReference>
<dbReference type="HAMAP" id="MF_01961">
    <property type="entry name" value="Catal_peroxid"/>
    <property type="match status" value="1"/>
</dbReference>
<dbReference type="InterPro" id="IPR000763">
    <property type="entry name" value="Catalase_peroxidase"/>
</dbReference>
<dbReference type="InterPro" id="IPR002016">
    <property type="entry name" value="Haem_peroxidase"/>
</dbReference>
<dbReference type="InterPro" id="IPR010255">
    <property type="entry name" value="Haem_peroxidase_sf"/>
</dbReference>
<dbReference type="InterPro" id="IPR019794">
    <property type="entry name" value="Peroxidases_AS"/>
</dbReference>
<dbReference type="InterPro" id="IPR019793">
    <property type="entry name" value="Peroxidases_heam-ligand_BS"/>
</dbReference>
<dbReference type="NCBIfam" id="TIGR00198">
    <property type="entry name" value="cat_per_HPI"/>
    <property type="match status" value="1"/>
</dbReference>
<dbReference type="NCBIfam" id="NF011635">
    <property type="entry name" value="PRK15061.1"/>
    <property type="match status" value="1"/>
</dbReference>
<dbReference type="PANTHER" id="PTHR30555:SF0">
    <property type="entry name" value="CATALASE-PEROXIDASE"/>
    <property type="match status" value="1"/>
</dbReference>
<dbReference type="PANTHER" id="PTHR30555">
    <property type="entry name" value="HYDROPEROXIDASE I, BIFUNCTIONAL CATALASE-PEROXIDASE"/>
    <property type="match status" value="1"/>
</dbReference>
<dbReference type="Pfam" id="PF00141">
    <property type="entry name" value="peroxidase"/>
    <property type="match status" value="2"/>
</dbReference>
<dbReference type="PRINTS" id="PR00460">
    <property type="entry name" value="BPEROXIDASE"/>
</dbReference>
<dbReference type="PRINTS" id="PR00458">
    <property type="entry name" value="PEROXIDASE"/>
</dbReference>
<dbReference type="SUPFAM" id="SSF48113">
    <property type="entry name" value="Heme-dependent peroxidases"/>
    <property type="match status" value="2"/>
</dbReference>
<dbReference type="PROSITE" id="PS00435">
    <property type="entry name" value="PEROXIDASE_1"/>
    <property type="match status" value="1"/>
</dbReference>
<dbReference type="PROSITE" id="PS00436">
    <property type="entry name" value="PEROXIDASE_2"/>
    <property type="match status" value="1"/>
</dbReference>
<dbReference type="PROSITE" id="PS50873">
    <property type="entry name" value="PEROXIDASE_4"/>
    <property type="match status" value="1"/>
</dbReference>
<keyword id="KW-0349">Heme</keyword>
<keyword id="KW-0376">Hydrogen peroxide</keyword>
<keyword id="KW-0408">Iron</keyword>
<keyword id="KW-0479">Metal-binding</keyword>
<keyword id="KW-0560">Oxidoreductase</keyword>
<keyword id="KW-0575">Peroxidase</keyword>